<comment type="function">
    <text evidence="2">Ser/Thr-kinase component of cyclin D-CDK4 (DC) complexes that phosphorylate and inhibit members of the retinoblastoma (RB) protein family including RB1 and regulate the cell-cycle during G(1)/S transition. Phosphorylation of RB1 allows dissociation of the transcription factor E2F from the RB/E2F complexes and the subsequent transcription of E2F target genes which are responsible for the progression through the G(1) phase. Hypophosphorylates RB1 in early G(1) phase. Cyclin D-CDK4 complexes are major integrators of various mitogenenic and antimitogenic signals. Also phosphorylates SMAD3 in a cell-cycle-dependent manner and represses its transcriptional activity. Component of the ternary complex, cyclin D/CDK4/CDKN1B, required for nuclear translocation and activity of the cyclin D-CDK4 complex (By similarity).</text>
</comment>
<comment type="catalytic activity">
    <reaction>
        <text>L-seryl-[protein] + ATP = O-phospho-L-seryl-[protein] + ADP + H(+)</text>
        <dbReference type="Rhea" id="RHEA:17989"/>
        <dbReference type="Rhea" id="RHEA-COMP:9863"/>
        <dbReference type="Rhea" id="RHEA-COMP:11604"/>
        <dbReference type="ChEBI" id="CHEBI:15378"/>
        <dbReference type="ChEBI" id="CHEBI:29999"/>
        <dbReference type="ChEBI" id="CHEBI:30616"/>
        <dbReference type="ChEBI" id="CHEBI:83421"/>
        <dbReference type="ChEBI" id="CHEBI:456216"/>
        <dbReference type="EC" id="2.7.11.22"/>
    </reaction>
</comment>
<comment type="catalytic activity">
    <reaction>
        <text>L-threonyl-[protein] + ATP = O-phospho-L-threonyl-[protein] + ADP + H(+)</text>
        <dbReference type="Rhea" id="RHEA:46608"/>
        <dbReference type="Rhea" id="RHEA-COMP:11060"/>
        <dbReference type="Rhea" id="RHEA-COMP:11605"/>
        <dbReference type="ChEBI" id="CHEBI:15378"/>
        <dbReference type="ChEBI" id="CHEBI:30013"/>
        <dbReference type="ChEBI" id="CHEBI:30616"/>
        <dbReference type="ChEBI" id="CHEBI:61977"/>
        <dbReference type="ChEBI" id="CHEBI:456216"/>
        <dbReference type="EC" id="2.7.11.22"/>
    </reaction>
</comment>
<comment type="activity regulation">
    <text evidence="2">Both phosphorylation at Thr-172 and binding of a D-type cyclin are necessary for enzymatic activity. Full activation of the cyclin-D-CDK4 complex appears to require other factors such as recruitment of the substrate via a substrate recruitment motif, and/or formation of the CDKN1B ternary complex. Inhibited by INK4 family members. In resting cells, the non-tyrosine-phosphorylated form of CDKN1B prevents phosphorylation at Thr-172 and inactivation, while, in proliferating cells, tyrosine phosphorylation of CDKN1B allows phosphorylation of Thr-172 of CDK4 and subsequent activation.</text>
</comment>
<comment type="subunit">
    <text evidence="2 3">Component of the D-CDK4 complex, composed of CDK4 and some D-type G1 cyclin (CCND1, CCND2 or CCND3). Interacts directly in the complex with CCND1, CCND2 or CCND3. Interacts with SEI1 and ZNF655. Forms a ternary complex, cyclin D-CDK4-CDKN1B, involved in modulating CDK4 enzymatic activity. Interacts directly with CDKN1B (phosphorylated on 'Tyr-88' and 'Tyr-89'); the interaction allows assembly of the cyclin D-CDK4 complex, Thr-172 phosphorylation, nuclear translocation and enhances the cyclin D-CDK4 complex activity. CDK4 activity is either inhibited or enhanced depending on stoichiometry of complex. The non-tyrosine-phosphorylated form of CDKN1B prevents T-loop phosphorylation of CDK4 producing inactive CDK4. Interacts (unphosphorylated form) with CDK2. Also forms ternary complexes with CDKN1A or CDKN2A. Interacts directly with CDKN1A (via its N-terminal); the interaction promotes the assembly of the cyclin D-CDK4 complex, its nuclear translocation and promotes the cyclin D-dependent enzyme activity of CDK4. Interacts with CCND1; the interaction is prevented with the binding of CCND1 to INSM1 during cell cycle progression. Probably forms a complex composed of chaperones HSP90 and HSP70, co-chaperones CDC37, PPP5C, TSC1 and client protein TSC2, CDK4, AKT, RAF1 and NR3C1; this complex does not contain co-chaperones STIP1/HOP and PTGES3/p23. Interacts with CEBPA (when phosphorylated). Interacts with FNIP1 and FNIP2.</text>
</comment>
<comment type="subcellular location">
    <subcellularLocation>
        <location evidence="2">Cytoplasm</location>
    </subcellularLocation>
    <subcellularLocation>
        <location evidence="2">Nucleus</location>
    </subcellularLocation>
    <subcellularLocation>
        <location evidence="2">Nucleus membrane</location>
    </subcellularLocation>
    <text evidence="2">Cytoplasmic when non-complexed. Forms a cyclin D-CDK4 complex in the cytoplasm as cells progress through G(1) phase. The complex accumulates on the nuclear membrane and enters the nucleus on transition from G(1) to S phase. Also present in nucleoli and heterochromatin lumps. Colocalizes with RB1 after release into the nucleus (By similarity).</text>
</comment>
<comment type="PTM">
    <text evidence="1">Phosphorylation at Thr-172 is required for enzymatic activity. Phosphorylated, in vitro, at this site by CCNH-CDK7, but, in vivo, appears to be phosphorylated by a proline-directed kinase. In the cyclin D-CDK4-CDKN1B complex, this phosphorylation and consequent CDK4 enzyme activity, is dependent on the tyrosine phosphorylation state of CDKN1B. Thus, in proliferating cells, CDK4 within the complex is phosphorylated on Thr-172 in the T-loop. In resting cells, phosphorylation on Thr-172 is prevented by the non-tyrosine-phosphorylated form of CDKN1B (By similarity).</text>
</comment>
<comment type="similarity">
    <text evidence="6">Belongs to the protein kinase superfamily. CMGC Ser/Thr protein kinase family. CDC2/CDKX subfamily.</text>
</comment>
<evidence type="ECO:0000250" key="1"/>
<evidence type="ECO:0000250" key="2">
    <source>
        <dbReference type="UniProtKB" id="P11802"/>
    </source>
</evidence>
<evidence type="ECO:0000250" key="3">
    <source>
        <dbReference type="UniProtKB" id="P30285"/>
    </source>
</evidence>
<evidence type="ECO:0000255" key="4">
    <source>
        <dbReference type="PROSITE-ProRule" id="PRU00159"/>
    </source>
</evidence>
<evidence type="ECO:0000255" key="5">
    <source>
        <dbReference type="PROSITE-ProRule" id="PRU10027"/>
    </source>
</evidence>
<evidence type="ECO:0000305" key="6"/>
<sequence length="303" mass="33690">MATSRYEPVAEIGVGAYGTVYKARDPHSGHFVALKSVRVPNGGGAGGGLPISTVREVALLRRLEAFEHPNVVRLMDVCATARTDRETKVTLVFEHVDQDLRTYLDKAPPPGLPVETIKDLMRQFLRGLDFLHANCIVHRDLKPENILVTSGGTVKLADFGLARIYSYQMALTPVVVTLWYRAPEVLLQSTYATPVDMWSVGCIFAEMFRRKPLFCGNSEADQLGKIFDLIGLPPEDDWPRDVSLPRGAFSPRGPRPVQSVVPEMEESGAQLLLEMLTFNPHKRISAFRALQHSYLHKAEGNPE</sequence>
<gene>
    <name type="primary">CDK4</name>
</gene>
<dbReference type="EC" id="2.7.11.22"/>
<dbReference type="EMBL" id="U68478">
    <property type="protein sequence ID" value="AAB39636.1"/>
    <property type="molecule type" value="Genomic_DNA"/>
</dbReference>
<dbReference type="EMBL" id="U68479">
    <property type="protein sequence ID" value="AAB39637.1"/>
    <property type="molecule type" value="Genomic_DNA"/>
</dbReference>
<dbReference type="RefSeq" id="NP_001116569.1">
    <property type="nucleotide sequence ID" value="NM_001123097.1"/>
</dbReference>
<dbReference type="SMR" id="P79432"/>
<dbReference type="FunCoup" id="P79432">
    <property type="interactions" value="1829"/>
</dbReference>
<dbReference type="STRING" id="9823.ENSSSCP00000022407"/>
<dbReference type="PaxDb" id="9823-ENSSSCP00000022407"/>
<dbReference type="PeptideAtlas" id="P79432"/>
<dbReference type="Ensembl" id="ENSSSCT00000028348.4">
    <property type="protein sequence ID" value="ENSSSCP00000022407.1"/>
    <property type="gene ID" value="ENSSSCG00000025092.4"/>
</dbReference>
<dbReference type="Ensembl" id="ENSSSCT00015027768.1">
    <property type="protein sequence ID" value="ENSSSCP00015010872.1"/>
    <property type="gene ID" value="ENSSSCG00015021039.1"/>
</dbReference>
<dbReference type="Ensembl" id="ENSSSCT00015027802.1">
    <property type="protein sequence ID" value="ENSSSCP00015010884.1"/>
    <property type="gene ID" value="ENSSSCG00015021039.1"/>
</dbReference>
<dbReference type="Ensembl" id="ENSSSCT00015027871.1">
    <property type="protein sequence ID" value="ENSSSCP00015010914.1"/>
    <property type="gene ID" value="ENSSSCG00015021039.1"/>
</dbReference>
<dbReference type="Ensembl" id="ENSSSCT00025029994.1">
    <property type="protein sequence ID" value="ENSSSCP00025012753.1"/>
    <property type="gene ID" value="ENSSSCG00025022032.1"/>
</dbReference>
<dbReference type="Ensembl" id="ENSSSCT00030089795.1">
    <property type="protein sequence ID" value="ENSSSCP00030041408.1"/>
    <property type="gene ID" value="ENSSSCG00030064224.1"/>
</dbReference>
<dbReference type="Ensembl" id="ENSSSCT00035009925.1">
    <property type="protein sequence ID" value="ENSSSCP00035003353.1"/>
    <property type="gene ID" value="ENSSSCG00035007972.1"/>
</dbReference>
<dbReference type="Ensembl" id="ENSSSCT00040075051.1">
    <property type="protein sequence ID" value="ENSSSCP00040032203.1"/>
    <property type="gene ID" value="ENSSSCG00040055398.1"/>
</dbReference>
<dbReference type="Ensembl" id="ENSSSCT00045018776.1">
    <property type="protein sequence ID" value="ENSSSCP00045012920.1"/>
    <property type="gene ID" value="ENSSSCG00045011047.1"/>
</dbReference>
<dbReference type="Ensembl" id="ENSSSCT00050001040.1">
    <property type="protein sequence ID" value="ENSSSCP00050000248.1"/>
    <property type="gene ID" value="ENSSSCG00050000908.1"/>
</dbReference>
<dbReference type="Ensembl" id="ENSSSCT00055036006.1">
    <property type="protein sequence ID" value="ENSSSCP00055028593.1"/>
    <property type="gene ID" value="ENSSSCG00055018402.1"/>
</dbReference>
<dbReference type="Ensembl" id="ENSSSCT00060007322.1">
    <property type="protein sequence ID" value="ENSSSCP00060002600.1"/>
    <property type="gene ID" value="ENSSSCG00060005787.1"/>
</dbReference>
<dbReference type="Ensembl" id="ENSSSCT00065005704.1">
    <property type="protein sequence ID" value="ENSSSCP00065002534.1"/>
    <property type="gene ID" value="ENSSSCG00065004166.1"/>
</dbReference>
<dbReference type="Ensembl" id="ENSSSCT00065005707.1">
    <property type="protein sequence ID" value="ENSSSCP00065002535.1"/>
    <property type="gene ID" value="ENSSSCG00065004166.1"/>
</dbReference>
<dbReference type="Ensembl" id="ENSSSCT00070058030.1">
    <property type="protein sequence ID" value="ENSSSCP00070049345.1"/>
    <property type="gene ID" value="ENSSSCG00070028938.1"/>
</dbReference>
<dbReference type="Ensembl" id="ENSSSCT00115031165">
    <property type="protein sequence ID" value="ENSSSCP00115029624"/>
    <property type="gene ID" value="ENSSSCG00115017616"/>
</dbReference>
<dbReference type="GeneID" id="100144492"/>
<dbReference type="KEGG" id="ssc:100144492"/>
<dbReference type="CTD" id="1019"/>
<dbReference type="VGNC" id="VGNC:86504">
    <property type="gene designation" value="CDK4"/>
</dbReference>
<dbReference type="eggNOG" id="KOG0594">
    <property type="taxonomic scope" value="Eukaryota"/>
</dbReference>
<dbReference type="GeneTree" id="ENSGT00940000154770"/>
<dbReference type="HOGENOM" id="CLU_000288_181_1_1"/>
<dbReference type="InParanoid" id="P79432"/>
<dbReference type="OMA" id="KNFPPLM"/>
<dbReference type="OrthoDB" id="1732493at2759"/>
<dbReference type="TreeFam" id="TF101022"/>
<dbReference type="Reactome" id="R-SSC-187577">
    <property type="pathway name" value="SCF(Skp2)-mediated degradation of p27/p21"/>
</dbReference>
<dbReference type="Reactome" id="R-SSC-2559580">
    <property type="pathway name" value="Oxidative Stress Induced Senescence"/>
</dbReference>
<dbReference type="Reactome" id="R-SSC-2559582">
    <property type="pathway name" value="Senescence-Associated Secretory Phenotype (SASP)"/>
</dbReference>
<dbReference type="Reactome" id="R-SSC-2559585">
    <property type="pathway name" value="Oncogene Induced Senescence"/>
</dbReference>
<dbReference type="Reactome" id="R-SSC-3214858">
    <property type="pathway name" value="RMTs methylate histone arginines"/>
</dbReference>
<dbReference type="Reactome" id="R-SSC-69231">
    <property type="pathway name" value="Cyclin D associated events in G1"/>
</dbReference>
<dbReference type="Reactome" id="R-SSC-75815">
    <property type="pathway name" value="Ubiquitin-dependent degradation of Cyclin D"/>
</dbReference>
<dbReference type="Reactome" id="R-SSC-8849470">
    <property type="pathway name" value="PTK6 Regulates Cell Cycle"/>
</dbReference>
<dbReference type="Reactome" id="R-SSC-8878166">
    <property type="pathway name" value="Transcriptional regulation by RUNX2"/>
</dbReference>
<dbReference type="Reactome" id="R-SSC-9616222">
    <property type="pathway name" value="Transcriptional regulation of granulopoiesis"/>
</dbReference>
<dbReference type="Reactome" id="R-SSC-9754119">
    <property type="pathway name" value="Drug-mediated inhibition of CDK4/CDK6 activity"/>
</dbReference>
<dbReference type="Proteomes" id="UP000008227">
    <property type="component" value="Chromosome 5"/>
</dbReference>
<dbReference type="Proteomes" id="UP000314985">
    <property type="component" value="Chromosome 5"/>
</dbReference>
<dbReference type="Proteomes" id="UP000694570">
    <property type="component" value="Unplaced"/>
</dbReference>
<dbReference type="Proteomes" id="UP000694571">
    <property type="component" value="Unplaced"/>
</dbReference>
<dbReference type="Proteomes" id="UP000694720">
    <property type="component" value="Unplaced"/>
</dbReference>
<dbReference type="Proteomes" id="UP000694722">
    <property type="component" value="Unplaced"/>
</dbReference>
<dbReference type="Proteomes" id="UP000694723">
    <property type="component" value="Unplaced"/>
</dbReference>
<dbReference type="Proteomes" id="UP000694724">
    <property type="component" value="Unplaced"/>
</dbReference>
<dbReference type="Proteomes" id="UP000694725">
    <property type="component" value="Unplaced"/>
</dbReference>
<dbReference type="Proteomes" id="UP000694726">
    <property type="component" value="Unplaced"/>
</dbReference>
<dbReference type="Proteomes" id="UP000694727">
    <property type="component" value="Unplaced"/>
</dbReference>
<dbReference type="Proteomes" id="UP000694728">
    <property type="component" value="Unplaced"/>
</dbReference>
<dbReference type="Bgee" id="ENSSSCG00000025092">
    <property type="expression patterns" value="Expressed in hindlimb bud and 44 other cell types or tissues"/>
</dbReference>
<dbReference type="GO" id="GO:0005923">
    <property type="term" value="C:bicellular tight junction"/>
    <property type="evidence" value="ECO:0007669"/>
    <property type="project" value="Ensembl"/>
</dbReference>
<dbReference type="GO" id="GO:0000785">
    <property type="term" value="C:chromatin"/>
    <property type="evidence" value="ECO:0007669"/>
    <property type="project" value="Ensembl"/>
</dbReference>
<dbReference type="GO" id="GO:0097128">
    <property type="term" value="C:cyclin D1-CDK4 complex"/>
    <property type="evidence" value="ECO:0007669"/>
    <property type="project" value="Ensembl"/>
</dbReference>
<dbReference type="GO" id="GO:0097129">
    <property type="term" value="C:cyclin D2-CDK4 complex"/>
    <property type="evidence" value="ECO:0007669"/>
    <property type="project" value="Ensembl"/>
</dbReference>
<dbReference type="GO" id="GO:0097130">
    <property type="term" value="C:cyclin D3-CDK4 complex"/>
    <property type="evidence" value="ECO:0007669"/>
    <property type="project" value="Ensembl"/>
</dbReference>
<dbReference type="GO" id="GO:0000307">
    <property type="term" value="C:cyclin-dependent protein kinase holoenzyme complex"/>
    <property type="evidence" value="ECO:0000318"/>
    <property type="project" value="GO_Central"/>
</dbReference>
<dbReference type="GO" id="GO:0005737">
    <property type="term" value="C:cytoplasm"/>
    <property type="evidence" value="ECO:0000314"/>
    <property type="project" value="AgBase"/>
</dbReference>
<dbReference type="GO" id="GO:0005829">
    <property type="term" value="C:cytosol"/>
    <property type="evidence" value="ECO:0007669"/>
    <property type="project" value="Ensembl"/>
</dbReference>
<dbReference type="GO" id="GO:0031965">
    <property type="term" value="C:nuclear membrane"/>
    <property type="evidence" value="ECO:0007669"/>
    <property type="project" value="UniProtKB-SubCell"/>
</dbReference>
<dbReference type="GO" id="GO:0005730">
    <property type="term" value="C:nucleolus"/>
    <property type="evidence" value="ECO:0007669"/>
    <property type="project" value="Ensembl"/>
</dbReference>
<dbReference type="GO" id="GO:0005654">
    <property type="term" value="C:nucleoplasm"/>
    <property type="evidence" value="ECO:0007669"/>
    <property type="project" value="Ensembl"/>
</dbReference>
<dbReference type="GO" id="GO:0005634">
    <property type="term" value="C:nucleus"/>
    <property type="evidence" value="ECO:0000314"/>
    <property type="project" value="AgBase"/>
</dbReference>
<dbReference type="GO" id="GO:0005667">
    <property type="term" value="C:transcription regulator complex"/>
    <property type="evidence" value="ECO:0007669"/>
    <property type="project" value="Ensembl"/>
</dbReference>
<dbReference type="GO" id="GO:0005524">
    <property type="term" value="F:ATP binding"/>
    <property type="evidence" value="ECO:0007669"/>
    <property type="project" value="UniProtKB-KW"/>
</dbReference>
<dbReference type="GO" id="GO:0030332">
    <property type="term" value="F:cyclin binding"/>
    <property type="evidence" value="ECO:0000318"/>
    <property type="project" value="GO_Central"/>
</dbReference>
<dbReference type="GO" id="GO:0004693">
    <property type="term" value="F:cyclin-dependent protein serine/threonine kinase activity"/>
    <property type="evidence" value="ECO:0000318"/>
    <property type="project" value="GO_Central"/>
</dbReference>
<dbReference type="GO" id="GO:0106310">
    <property type="term" value="F:protein serine kinase activity"/>
    <property type="evidence" value="ECO:0007669"/>
    <property type="project" value="RHEA"/>
</dbReference>
<dbReference type="GO" id="GO:0051301">
    <property type="term" value="P:cell division"/>
    <property type="evidence" value="ECO:0007669"/>
    <property type="project" value="UniProtKB-KW"/>
</dbReference>
<dbReference type="GO" id="GO:0071353">
    <property type="term" value="P:cellular response to interleukin-4"/>
    <property type="evidence" value="ECO:0007669"/>
    <property type="project" value="Ensembl"/>
</dbReference>
<dbReference type="GO" id="GO:1904637">
    <property type="term" value="P:cellular response to ionomycin"/>
    <property type="evidence" value="ECO:0007669"/>
    <property type="project" value="Ensembl"/>
</dbReference>
<dbReference type="GO" id="GO:0071222">
    <property type="term" value="P:cellular response to lipopolysaccharide"/>
    <property type="evidence" value="ECO:0007669"/>
    <property type="project" value="Ensembl"/>
</dbReference>
<dbReference type="GO" id="GO:1904628">
    <property type="term" value="P:cellular response to phorbol 13-acetate 12-myristate"/>
    <property type="evidence" value="ECO:0007669"/>
    <property type="project" value="Ensembl"/>
</dbReference>
<dbReference type="GO" id="GO:0000082">
    <property type="term" value="P:G1/S transition of mitotic cell cycle"/>
    <property type="evidence" value="ECO:0000318"/>
    <property type="project" value="GO_Central"/>
</dbReference>
<dbReference type="GO" id="GO:0048146">
    <property type="term" value="P:positive regulation of fibroblast proliferation"/>
    <property type="evidence" value="ECO:0007669"/>
    <property type="project" value="Ensembl"/>
</dbReference>
<dbReference type="GO" id="GO:0010971">
    <property type="term" value="P:positive regulation of G2/M transition of mitotic cell cycle"/>
    <property type="evidence" value="ECO:0000250"/>
    <property type="project" value="UniProtKB"/>
</dbReference>
<dbReference type="GO" id="GO:0010389">
    <property type="term" value="P:regulation of G2/M transition of mitotic cell cycle"/>
    <property type="evidence" value="ECO:0000318"/>
    <property type="project" value="GO_Central"/>
</dbReference>
<dbReference type="GO" id="GO:0010468">
    <property type="term" value="P:regulation of gene expression"/>
    <property type="evidence" value="ECO:0000318"/>
    <property type="project" value="GO_Central"/>
</dbReference>
<dbReference type="GO" id="GO:0061469">
    <property type="term" value="P:regulation of type B pancreatic cell proliferation"/>
    <property type="evidence" value="ECO:0007669"/>
    <property type="project" value="Ensembl"/>
</dbReference>
<dbReference type="GO" id="GO:0009410">
    <property type="term" value="P:response to xenobiotic stimulus"/>
    <property type="evidence" value="ECO:0007669"/>
    <property type="project" value="Ensembl"/>
</dbReference>
<dbReference type="GO" id="GO:0007165">
    <property type="term" value="P:signal transduction"/>
    <property type="evidence" value="ECO:0000318"/>
    <property type="project" value="GO_Central"/>
</dbReference>
<dbReference type="CDD" id="cd07863">
    <property type="entry name" value="STKc_CDK4"/>
    <property type="match status" value="1"/>
</dbReference>
<dbReference type="FunFam" id="3.30.200.20:FF:000124">
    <property type="entry name" value="Cyclin-dependent kinase 4"/>
    <property type="match status" value="1"/>
</dbReference>
<dbReference type="FunFam" id="1.10.510.10:FF:000205">
    <property type="entry name" value="Cyclin-dependent kinase 6"/>
    <property type="match status" value="1"/>
</dbReference>
<dbReference type="Gene3D" id="3.30.200.20">
    <property type="entry name" value="Phosphorylase Kinase, domain 1"/>
    <property type="match status" value="1"/>
</dbReference>
<dbReference type="Gene3D" id="1.10.510.10">
    <property type="entry name" value="Transferase(Phosphotransferase) domain 1"/>
    <property type="match status" value="1"/>
</dbReference>
<dbReference type="InterPro" id="IPR050108">
    <property type="entry name" value="CDK"/>
</dbReference>
<dbReference type="InterPro" id="IPR011009">
    <property type="entry name" value="Kinase-like_dom_sf"/>
</dbReference>
<dbReference type="InterPro" id="IPR000719">
    <property type="entry name" value="Prot_kinase_dom"/>
</dbReference>
<dbReference type="InterPro" id="IPR017441">
    <property type="entry name" value="Protein_kinase_ATP_BS"/>
</dbReference>
<dbReference type="InterPro" id="IPR008271">
    <property type="entry name" value="Ser/Thr_kinase_AS"/>
</dbReference>
<dbReference type="PANTHER" id="PTHR24056">
    <property type="entry name" value="CELL DIVISION PROTEIN KINASE"/>
    <property type="match status" value="1"/>
</dbReference>
<dbReference type="PANTHER" id="PTHR24056:SF129">
    <property type="entry name" value="CYCLIN-DEPENDENT KINASE 4"/>
    <property type="match status" value="1"/>
</dbReference>
<dbReference type="Pfam" id="PF00069">
    <property type="entry name" value="Pkinase"/>
    <property type="match status" value="1"/>
</dbReference>
<dbReference type="SMART" id="SM00220">
    <property type="entry name" value="S_TKc"/>
    <property type="match status" value="1"/>
</dbReference>
<dbReference type="SUPFAM" id="SSF56112">
    <property type="entry name" value="Protein kinase-like (PK-like)"/>
    <property type="match status" value="1"/>
</dbReference>
<dbReference type="PROSITE" id="PS00107">
    <property type="entry name" value="PROTEIN_KINASE_ATP"/>
    <property type="match status" value="1"/>
</dbReference>
<dbReference type="PROSITE" id="PS50011">
    <property type="entry name" value="PROTEIN_KINASE_DOM"/>
    <property type="match status" value="1"/>
</dbReference>
<dbReference type="PROSITE" id="PS00108">
    <property type="entry name" value="PROTEIN_KINASE_ST"/>
    <property type="match status" value="1"/>
</dbReference>
<proteinExistence type="inferred from homology"/>
<feature type="initiator methionine" description="Removed" evidence="2">
    <location>
        <position position="1"/>
    </location>
</feature>
<feature type="chain" id="PRO_0000085780" description="Cyclin-dependent kinase 4">
    <location>
        <begin position="2"/>
        <end position="303"/>
    </location>
</feature>
<feature type="domain" description="Protein kinase" evidence="4">
    <location>
        <begin position="6"/>
        <end position="295"/>
    </location>
</feature>
<feature type="region of interest" description="Required for binding D-type cyclins" evidence="1">
    <location>
        <begin position="50"/>
        <end position="56"/>
    </location>
</feature>
<feature type="active site" description="Proton acceptor" evidence="4 5">
    <location>
        <position position="140"/>
    </location>
</feature>
<feature type="binding site" evidence="4">
    <location>
        <begin position="12"/>
        <end position="20"/>
    </location>
    <ligand>
        <name>ATP</name>
        <dbReference type="ChEBI" id="CHEBI:30616"/>
    </ligand>
</feature>
<feature type="binding site" evidence="4">
    <location>
        <position position="35"/>
    </location>
    <ligand>
        <name>ATP</name>
        <dbReference type="ChEBI" id="CHEBI:30616"/>
    </ligand>
</feature>
<feature type="modified residue" description="N-acetylalanine" evidence="2">
    <location>
        <position position="2"/>
    </location>
</feature>
<feature type="modified residue" description="Phosphothreonine; by CAK" evidence="3">
    <location>
        <position position="172"/>
    </location>
</feature>
<protein>
    <recommendedName>
        <fullName>Cyclin-dependent kinase 4</fullName>
        <ecNumber>2.7.11.22</ecNumber>
    </recommendedName>
    <alternativeName>
        <fullName>Cell division protein kinase 4</fullName>
    </alternativeName>
</protein>
<keyword id="KW-0007">Acetylation</keyword>
<keyword id="KW-0067">ATP-binding</keyword>
<keyword id="KW-0131">Cell cycle</keyword>
<keyword id="KW-0132">Cell division</keyword>
<keyword id="KW-0963">Cytoplasm</keyword>
<keyword id="KW-0418">Kinase</keyword>
<keyword id="KW-0472">Membrane</keyword>
<keyword id="KW-0547">Nucleotide-binding</keyword>
<keyword id="KW-0539">Nucleus</keyword>
<keyword id="KW-0597">Phosphoprotein</keyword>
<keyword id="KW-0656">Proto-oncogene</keyword>
<keyword id="KW-1185">Reference proteome</keyword>
<keyword id="KW-0723">Serine/threonine-protein kinase</keyword>
<keyword id="KW-0808">Transferase</keyword>
<organism>
    <name type="scientific">Sus scrofa</name>
    <name type="common">Pig</name>
    <dbReference type="NCBI Taxonomy" id="9823"/>
    <lineage>
        <taxon>Eukaryota</taxon>
        <taxon>Metazoa</taxon>
        <taxon>Chordata</taxon>
        <taxon>Craniata</taxon>
        <taxon>Vertebrata</taxon>
        <taxon>Euteleostomi</taxon>
        <taxon>Mammalia</taxon>
        <taxon>Eutheria</taxon>
        <taxon>Laurasiatheria</taxon>
        <taxon>Artiodactyla</taxon>
        <taxon>Suina</taxon>
        <taxon>Suidae</taxon>
        <taxon>Sus</taxon>
    </lineage>
</organism>
<reference key="1">
    <citation type="submission" date="1997-01" db="EMBL/GenBank/DDBJ databases">
        <title>Sequence and intron/exon organization of porcine CDK4 gene.</title>
        <authorList>
            <person name="Shibuya H."/>
            <person name="Renshaw F.G."/>
            <person name="Bouchard G.F."/>
            <person name="Nonneman D."/>
            <person name="Johnson G.S."/>
        </authorList>
    </citation>
    <scope>NUCLEOTIDE SEQUENCE [GENOMIC DNA]</scope>
</reference>
<name>CDK4_PIG</name>
<accession>P79432</accession>